<name>ZSC12_PANPA</name>
<protein>
    <recommendedName>
        <fullName>Zinc finger and SCAN domain-containing protein 12</fullName>
    </recommendedName>
    <alternativeName>
        <fullName>Zinc finger protein 96</fullName>
    </alternativeName>
</protein>
<sequence>MASTWAIQAHMDQDEPLEVKIEEEKYTTRQDWDLRKNNTHSREVFRQYFRQFCYQETSGPREALSRLRELCHQWLRPETHTKEQILELLVLEQFLTILPEELQAWVQEQHPESGEEVVTVLEDLERELDEPGEQVSAHTGEQEMFLQETVRLRKEGEPSMSLQSMKAQPKYESPELESQQEQVLDVETGNEYGNLKQEVSEEMEPHGNTSSKFENDMSKSARCGETREPEEITEEPSACSREDKQPTCDENGVSLTENSDHTEHQRICPGEESYGCDYCGKTFSQHSHLIEHQRIHTGDRPYKCEECGKAFRGRTVLIRHKIIHTGEKPYKCNECGKAFGRWSALNQHQRLHTGEKHYHCNDCGKAFSQKAGLFHHIKIHTRDKPYQCTHCNKSFSRRSILTQHQGVHTGAKPYECNECGKAFVYNSSLVSHQEIHHKEKCYQCKECGKSFSQSGLIQHQRIHTGEKPYKCDVCEKAFIQRTSLTEHQRIHTGERPYKCDKCGKAFTQRSVLTEHQRIHTGERPYKCDECGNAFRGITSLIQHQRIHTGEKPYQCDECGKAFRQRKKTSYKEILLKNHSEPQAGVNLLLSSLIPEWQSCFRKDL</sequence>
<organism>
    <name type="scientific">Pan paniscus</name>
    <name type="common">Pygmy chimpanzee</name>
    <name type="synonym">Bonobo</name>
    <dbReference type="NCBI Taxonomy" id="9597"/>
    <lineage>
        <taxon>Eukaryota</taxon>
        <taxon>Metazoa</taxon>
        <taxon>Chordata</taxon>
        <taxon>Craniata</taxon>
        <taxon>Vertebrata</taxon>
        <taxon>Euteleostomi</taxon>
        <taxon>Mammalia</taxon>
        <taxon>Eutheria</taxon>
        <taxon>Euarchontoglires</taxon>
        <taxon>Primates</taxon>
        <taxon>Haplorrhini</taxon>
        <taxon>Catarrhini</taxon>
        <taxon>Hominidae</taxon>
        <taxon>Pan</taxon>
    </lineage>
</organism>
<feature type="chain" id="PRO_0000285484" description="Zinc finger and SCAN domain-containing protein 12">
    <location>
        <begin position="1"/>
        <end position="604"/>
    </location>
</feature>
<feature type="domain" description="SCAN box" evidence="3">
    <location>
        <begin position="46"/>
        <end position="128"/>
    </location>
</feature>
<feature type="zinc finger region" description="C2H2-type 1" evidence="2">
    <location>
        <begin position="274"/>
        <end position="296"/>
    </location>
</feature>
<feature type="zinc finger region" description="C2H2-type 2" evidence="2">
    <location>
        <begin position="302"/>
        <end position="324"/>
    </location>
</feature>
<feature type="zinc finger region" description="C2H2-type 3" evidence="2">
    <location>
        <begin position="330"/>
        <end position="352"/>
    </location>
</feature>
<feature type="zinc finger region" description="C2H2-type 4" evidence="2">
    <location>
        <begin position="358"/>
        <end position="380"/>
    </location>
</feature>
<feature type="zinc finger region" description="C2H2-type 5" evidence="2">
    <location>
        <begin position="386"/>
        <end position="408"/>
    </location>
</feature>
<feature type="zinc finger region" description="C2H2-type 6" evidence="2">
    <location>
        <begin position="414"/>
        <end position="436"/>
    </location>
</feature>
<feature type="zinc finger region" description="C2H2-type 7" evidence="2">
    <location>
        <begin position="442"/>
        <end position="463"/>
    </location>
</feature>
<feature type="zinc finger region" description="C2H2-type 8" evidence="2">
    <location>
        <begin position="469"/>
        <end position="491"/>
    </location>
</feature>
<feature type="zinc finger region" description="C2H2-type 9" evidence="2">
    <location>
        <begin position="497"/>
        <end position="519"/>
    </location>
</feature>
<feature type="zinc finger region" description="C2H2-type 10" evidence="2">
    <location>
        <begin position="525"/>
        <end position="547"/>
    </location>
</feature>
<feature type="zinc finger region" description="C2H2-type 11; degenerate" evidence="2">
    <location>
        <begin position="553"/>
        <end position="578"/>
    </location>
</feature>
<feature type="region of interest" description="Disordered" evidence="4">
    <location>
        <begin position="154"/>
        <end position="175"/>
    </location>
</feature>
<feature type="region of interest" description="Disordered" evidence="4">
    <location>
        <begin position="201"/>
        <end position="258"/>
    </location>
</feature>
<feature type="compositionally biased region" description="Basic and acidic residues" evidence="4">
    <location>
        <begin position="213"/>
        <end position="230"/>
    </location>
</feature>
<feature type="cross-link" description="Glycyl lysine isopeptide (Lys-Gly) (interchain with G-Cter in SUMO2)" evidence="1">
    <location>
        <position position="20"/>
    </location>
</feature>
<feature type="cross-link" description="Glycyl lysine isopeptide (Lys-Gly) (interchain with G-Cter in SUMO2)" evidence="1">
    <location>
        <position position="25"/>
    </location>
</feature>
<feature type="cross-link" description="Glycyl lysine isopeptide (Lys-Gly) (interchain with G-Cter in SUMO2)" evidence="1">
    <location>
        <position position="196"/>
    </location>
</feature>
<comment type="function">
    <text>May be involved in transcriptional regulation.</text>
</comment>
<comment type="subcellular location">
    <subcellularLocation>
        <location evidence="3">Nucleus</location>
    </subcellularLocation>
</comment>
<comment type="similarity">
    <text evidence="5">Belongs to the krueppel C2H2-type zinc-finger protein family.</text>
</comment>
<proteinExistence type="inferred from homology"/>
<dbReference type="EMBL" id="DQ977163">
    <property type="protein sequence ID" value="ABM54187.1"/>
    <property type="molecule type" value="Genomic_DNA"/>
</dbReference>
<dbReference type="RefSeq" id="XP_063461286.1">
    <property type="nucleotide sequence ID" value="XM_063605216.1"/>
</dbReference>
<dbReference type="SMR" id="A1YFW2"/>
<dbReference type="GeneID" id="103783484"/>
<dbReference type="eggNOG" id="KOG1721">
    <property type="taxonomic scope" value="Eukaryota"/>
</dbReference>
<dbReference type="Proteomes" id="UP000240080">
    <property type="component" value="Unplaced"/>
</dbReference>
<dbReference type="GO" id="GO:0005634">
    <property type="term" value="C:nucleus"/>
    <property type="evidence" value="ECO:0007669"/>
    <property type="project" value="UniProtKB-SubCell"/>
</dbReference>
<dbReference type="GO" id="GO:0000981">
    <property type="term" value="F:DNA-binding transcription factor activity, RNA polymerase II-specific"/>
    <property type="evidence" value="ECO:0007669"/>
    <property type="project" value="TreeGrafter"/>
</dbReference>
<dbReference type="GO" id="GO:0000978">
    <property type="term" value="F:RNA polymerase II cis-regulatory region sequence-specific DNA binding"/>
    <property type="evidence" value="ECO:0007669"/>
    <property type="project" value="TreeGrafter"/>
</dbReference>
<dbReference type="GO" id="GO:0008270">
    <property type="term" value="F:zinc ion binding"/>
    <property type="evidence" value="ECO:0007669"/>
    <property type="project" value="UniProtKB-KW"/>
</dbReference>
<dbReference type="CDD" id="cd07936">
    <property type="entry name" value="SCAN"/>
    <property type="match status" value="1"/>
</dbReference>
<dbReference type="FunFam" id="3.30.160.60:FF:000056">
    <property type="entry name" value="Zinc finger and SCAN domain-containing 20"/>
    <property type="match status" value="1"/>
</dbReference>
<dbReference type="FunFam" id="3.30.160.60:FF:001087">
    <property type="entry name" value="Zinc finger and SCAN domain-containing protein 26"/>
    <property type="match status" value="1"/>
</dbReference>
<dbReference type="FunFam" id="3.30.160.60:FF:000144">
    <property type="entry name" value="zinc finger protein 181 isoform X1"/>
    <property type="match status" value="1"/>
</dbReference>
<dbReference type="FunFam" id="3.30.160.60:FF:000512">
    <property type="entry name" value="zinc finger protein 197 isoform X1"/>
    <property type="match status" value="1"/>
</dbReference>
<dbReference type="FunFam" id="1.10.4020.10:FF:000001">
    <property type="entry name" value="zinc finger protein 263 isoform X1"/>
    <property type="match status" value="1"/>
</dbReference>
<dbReference type="FunFam" id="3.30.160.60:FF:000970">
    <property type="entry name" value="zinc finger protein 333 isoform X2"/>
    <property type="match status" value="1"/>
</dbReference>
<dbReference type="FunFam" id="3.30.160.60:FF:002343">
    <property type="entry name" value="Zinc finger protein 33A"/>
    <property type="match status" value="1"/>
</dbReference>
<dbReference type="FunFam" id="3.30.160.60:FF:000016">
    <property type="entry name" value="zinc finger protein 37 homolog"/>
    <property type="match status" value="1"/>
</dbReference>
<dbReference type="FunFam" id="3.30.160.60:FF:001882">
    <property type="entry name" value="Zinc finger protein 473"/>
    <property type="match status" value="1"/>
</dbReference>
<dbReference type="FunFam" id="3.30.160.60:FF:000070">
    <property type="entry name" value="zinc finger protein 689 isoform X1"/>
    <property type="match status" value="1"/>
</dbReference>
<dbReference type="FunFam" id="3.30.160.60:FF:000176">
    <property type="entry name" value="zinc finger protein 70"/>
    <property type="match status" value="1"/>
</dbReference>
<dbReference type="FunFam" id="3.30.160.60:FF:000330">
    <property type="entry name" value="Zinc finger with KRAB and SCAN domains 1"/>
    <property type="match status" value="1"/>
</dbReference>
<dbReference type="Gene3D" id="3.30.160.60">
    <property type="entry name" value="Classic Zinc Finger"/>
    <property type="match status" value="11"/>
</dbReference>
<dbReference type="Gene3D" id="1.10.4020.10">
    <property type="entry name" value="DNA breaking-rejoining enzymes"/>
    <property type="match status" value="1"/>
</dbReference>
<dbReference type="InterPro" id="IPR003309">
    <property type="entry name" value="SCAN_dom"/>
</dbReference>
<dbReference type="InterPro" id="IPR038269">
    <property type="entry name" value="SCAN_sf"/>
</dbReference>
<dbReference type="InterPro" id="IPR036236">
    <property type="entry name" value="Znf_C2H2_sf"/>
</dbReference>
<dbReference type="InterPro" id="IPR013087">
    <property type="entry name" value="Znf_C2H2_type"/>
</dbReference>
<dbReference type="PANTHER" id="PTHR23226">
    <property type="entry name" value="ZINC FINGER AND SCAN DOMAIN-CONTAINING"/>
    <property type="match status" value="1"/>
</dbReference>
<dbReference type="PANTHER" id="PTHR23226:SF76">
    <property type="entry name" value="ZINC FINGER AND SCAN DOMAIN-CONTAINING PROTEIN 23"/>
    <property type="match status" value="1"/>
</dbReference>
<dbReference type="Pfam" id="PF02023">
    <property type="entry name" value="SCAN"/>
    <property type="match status" value="1"/>
</dbReference>
<dbReference type="Pfam" id="PF00096">
    <property type="entry name" value="zf-C2H2"/>
    <property type="match status" value="10"/>
</dbReference>
<dbReference type="SMART" id="SM00431">
    <property type="entry name" value="SCAN"/>
    <property type="match status" value="1"/>
</dbReference>
<dbReference type="SMART" id="SM00355">
    <property type="entry name" value="ZnF_C2H2"/>
    <property type="match status" value="10"/>
</dbReference>
<dbReference type="SUPFAM" id="SSF57667">
    <property type="entry name" value="beta-beta-alpha zinc fingers"/>
    <property type="match status" value="6"/>
</dbReference>
<dbReference type="SUPFAM" id="SSF47353">
    <property type="entry name" value="Retrovirus capsid dimerization domain-like"/>
    <property type="match status" value="1"/>
</dbReference>
<dbReference type="PROSITE" id="PS50804">
    <property type="entry name" value="SCAN_BOX"/>
    <property type="match status" value="1"/>
</dbReference>
<dbReference type="PROSITE" id="PS00028">
    <property type="entry name" value="ZINC_FINGER_C2H2_1"/>
    <property type="match status" value="9"/>
</dbReference>
<dbReference type="PROSITE" id="PS50157">
    <property type="entry name" value="ZINC_FINGER_C2H2_2"/>
    <property type="match status" value="11"/>
</dbReference>
<gene>
    <name type="primary">ZSCAN12</name>
    <name type="synonym">ZNF96</name>
</gene>
<accession>A1YFW2</accession>
<reference key="1">
    <citation type="submission" date="2006-08" db="EMBL/GenBank/DDBJ databases">
        <title>Positive selection in transcription factor genes on the human lineage.</title>
        <authorList>
            <person name="Nickel G.C."/>
            <person name="Tefft D.L."/>
            <person name="Trevarthen K."/>
            <person name="Funt J."/>
            <person name="Adams M.D."/>
        </authorList>
    </citation>
    <scope>NUCLEOTIDE SEQUENCE [GENOMIC DNA]</scope>
</reference>
<evidence type="ECO:0000250" key="1">
    <source>
        <dbReference type="UniProtKB" id="O43309"/>
    </source>
</evidence>
<evidence type="ECO:0000255" key="2">
    <source>
        <dbReference type="PROSITE-ProRule" id="PRU00042"/>
    </source>
</evidence>
<evidence type="ECO:0000255" key="3">
    <source>
        <dbReference type="PROSITE-ProRule" id="PRU00187"/>
    </source>
</evidence>
<evidence type="ECO:0000256" key="4">
    <source>
        <dbReference type="SAM" id="MobiDB-lite"/>
    </source>
</evidence>
<evidence type="ECO:0000305" key="5"/>
<keyword id="KW-0238">DNA-binding</keyword>
<keyword id="KW-1017">Isopeptide bond</keyword>
<keyword id="KW-0479">Metal-binding</keyword>
<keyword id="KW-0539">Nucleus</keyword>
<keyword id="KW-1185">Reference proteome</keyword>
<keyword id="KW-0677">Repeat</keyword>
<keyword id="KW-0804">Transcription</keyword>
<keyword id="KW-0805">Transcription regulation</keyword>
<keyword id="KW-0832">Ubl conjugation</keyword>
<keyword id="KW-0862">Zinc</keyword>
<keyword id="KW-0863">Zinc-finger</keyword>